<sequence>MNHYIRTIGSMLILVYSMLAAFLFIDKVFVNIIYFQGMFYTQIFGIPVFLFLNLIIILLCIIVGSVLAYKINQQNDWIKTQIERSMEGETVGINDQNIEIYSETLDLYHTLVPLNQELHKLRLKTQNLTNENYNINDVKVKKIIEDERQRLARELHDSVSQQLFAASMMLSAIKETKLEPPLDQQIPILEKMVQDSQLEMRALLLHLRPLGLKDKSLGEGIKDLVIDLQKKVPMKVVHEIQDFKVPKGIEDHLFRITQEAISNTLRHSNGTKVTVELFNKDDYLLLRIQDNGKGFNVDEKLEQSYGLKNMRERALEIGATFHIVSLPDSGTRIEVKAPLNKEDSYDD</sequence>
<feature type="chain" id="PRO_0000074899" description="Sensor protein VraS">
    <location>
        <begin position="1"/>
        <end position="347"/>
    </location>
</feature>
<feature type="transmembrane region" description="Helical" evidence="3">
    <location>
        <begin position="13"/>
        <end position="33"/>
    </location>
</feature>
<feature type="transmembrane region" description="Helical" evidence="3">
    <location>
        <begin position="43"/>
        <end position="63"/>
    </location>
</feature>
<feature type="domain" description="Histidine kinase">
    <location>
        <begin position="150"/>
        <end position="341"/>
    </location>
</feature>
<feature type="modified residue" description="Phosphohistidine" evidence="1">
    <location>
        <position position="156"/>
    </location>
</feature>
<gene>
    <name type="primary">vraS</name>
    <name type="ordered locus">SACOL1943</name>
</gene>
<comment type="function">
    <text evidence="2">Member of the two-component regulatory system PprA/PprB involved in biofilm formation by controlling the expression of many related genes including type IVb pili major subunit flp pilin, adhesin bapA or cupE fimbriae. Also modulates quorum-sensing signal production acting on both negative and positive modulators. Functions as a heme sensor histidine kinase which is autophosphorylated at a histidine residue and transfers its phosphate group to PprB.</text>
</comment>
<comment type="catalytic activity">
    <reaction evidence="1">
        <text>ATP + protein L-histidine = ADP + protein N-phospho-L-histidine.</text>
        <dbReference type="EC" id="2.7.13.3"/>
    </reaction>
</comment>
<comment type="subcellular location">
    <subcellularLocation>
        <location evidence="4">Cell membrane</location>
        <topology evidence="4">Multi-pass membrane protein</topology>
    </subcellularLocation>
</comment>
<comment type="PTM">
    <text evidence="1">Autophosphorylated on His-156.</text>
</comment>
<keyword id="KW-0067">ATP-binding</keyword>
<keyword id="KW-1003">Cell membrane</keyword>
<keyword id="KW-0418">Kinase</keyword>
<keyword id="KW-0472">Membrane</keyword>
<keyword id="KW-0547">Nucleotide-binding</keyword>
<keyword id="KW-0597">Phosphoprotein</keyword>
<keyword id="KW-0808">Transferase</keyword>
<keyword id="KW-0812">Transmembrane</keyword>
<keyword id="KW-1133">Transmembrane helix</keyword>
<keyword id="KW-0902">Two-component regulatory system</keyword>
<accession>Q5HEN9</accession>
<reference key="1">
    <citation type="journal article" date="2005" name="J. Bacteriol.">
        <title>Insights on evolution of virulence and resistance from the complete genome analysis of an early methicillin-resistant Staphylococcus aureus strain and a biofilm-producing methicillin-resistant Staphylococcus epidermidis strain.</title>
        <authorList>
            <person name="Gill S.R."/>
            <person name="Fouts D.E."/>
            <person name="Archer G.L."/>
            <person name="Mongodin E.F."/>
            <person name="DeBoy R.T."/>
            <person name="Ravel J."/>
            <person name="Paulsen I.T."/>
            <person name="Kolonay J.F."/>
            <person name="Brinkac L.M."/>
            <person name="Beanan M.J."/>
            <person name="Dodson R.J."/>
            <person name="Daugherty S.C."/>
            <person name="Madupu R."/>
            <person name="Angiuoli S.V."/>
            <person name="Durkin A.S."/>
            <person name="Haft D.H."/>
            <person name="Vamathevan J.J."/>
            <person name="Khouri H."/>
            <person name="Utterback T.R."/>
            <person name="Lee C."/>
            <person name="Dimitrov G."/>
            <person name="Jiang L."/>
            <person name="Qin H."/>
            <person name="Weidman J."/>
            <person name="Tran K."/>
            <person name="Kang K.H."/>
            <person name="Hance I.R."/>
            <person name="Nelson K.E."/>
            <person name="Fraser C.M."/>
        </authorList>
    </citation>
    <scope>NUCLEOTIDE SEQUENCE [LARGE SCALE GENOMIC DNA]</scope>
    <source>
        <strain>COL</strain>
    </source>
</reference>
<protein>
    <recommendedName>
        <fullName>Sensor protein VraS</fullName>
        <ecNumber evidence="1">2.7.13.3</ecNumber>
    </recommendedName>
</protein>
<name>VRAS_STAAC</name>
<dbReference type="EC" id="2.7.13.3" evidence="1"/>
<dbReference type="EMBL" id="CP000046">
    <property type="protein sequence ID" value="AAW38384.1"/>
    <property type="molecule type" value="Genomic_DNA"/>
</dbReference>
<dbReference type="RefSeq" id="WP_001017131.1">
    <property type="nucleotide sequence ID" value="NZ_JBGOFO010000006.1"/>
</dbReference>
<dbReference type="SMR" id="Q5HEN9"/>
<dbReference type="KEGG" id="sac:SACOL1943"/>
<dbReference type="HOGENOM" id="CLU_000445_20_12_9"/>
<dbReference type="Proteomes" id="UP000000530">
    <property type="component" value="Chromosome"/>
</dbReference>
<dbReference type="GO" id="GO:0005886">
    <property type="term" value="C:plasma membrane"/>
    <property type="evidence" value="ECO:0007669"/>
    <property type="project" value="UniProtKB-SubCell"/>
</dbReference>
<dbReference type="GO" id="GO:0005524">
    <property type="term" value="F:ATP binding"/>
    <property type="evidence" value="ECO:0007669"/>
    <property type="project" value="UniProtKB-KW"/>
</dbReference>
<dbReference type="GO" id="GO:0000155">
    <property type="term" value="F:phosphorelay sensor kinase activity"/>
    <property type="evidence" value="ECO:0007669"/>
    <property type="project" value="InterPro"/>
</dbReference>
<dbReference type="GO" id="GO:0046983">
    <property type="term" value="F:protein dimerization activity"/>
    <property type="evidence" value="ECO:0007669"/>
    <property type="project" value="InterPro"/>
</dbReference>
<dbReference type="CDD" id="cd16917">
    <property type="entry name" value="HATPase_UhpB-NarQ-NarX-like"/>
    <property type="match status" value="1"/>
</dbReference>
<dbReference type="Gene3D" id="1.20.5.1930">
    <property type="match status" value="1"/>
</dbReference>
<dbReference type="Gene3D" id="3.30.565.10">
    <property type="entry name" value="Histidine kinase-like ATPase, C-terminal domain"/>
    <property type="match status" value="1"/>
</dbReference>
<dbReference type="InterPro" id="IPR036890">
    <property type="entry name" value="HATPase_C_sf"/>
</dbReference>
<dbReference type="InterPro" id="IPR017202">
    <property type="entry name" value="LiaS/VraS"/>
</dbReference>
<dbReference type="InterPro" id="IPR050482">
    <property type="entry name" value="Sensor_HK_TwoCompSys"/>
</dbReference>
<dbReference type="InterPro" id="IPR011712">
    <property type="entry name" value="Sig_transdc_His_kin_sub3_dim/P"/>
</dbReference>
<dbReference type="PANTHER" id="PTHR24421">
    <property type="entry name" value="NITRATE/NITRITE SENSOR PROTEIN NARX-RELATED"/>
    <property type="match status" value="1"/>
</dbReference>
<dbReference type="PANTHER" id="PTHR24421:SF37">
    <property type="entry name" value="SENSOR HISTIDINE KINASE NARS"/>
    <property type="match status" value="1"/>
</dbReference>
<dbReference type="Pfam" id="PF02518">
    <property type="entry name" value="HATPase_c"/>
    <property type="match status" value="1"/>
</dbReference>
<dbReference type="Pfam" id="PF07730">
    <property type="entry name" value="HisKA_3"/>
    <property type="match status" value="1"/>
</dbReference>
<dbReference type="PIRSF" id="PIRSF037431">
    <property type="entry name" value="STHK_LiaS"/>
    <property type="match status" value="1"/>
</dbReference>
<dbReference type="SMART" id="SM00387">
    <property type="entry name" value="HATPase_c"/>
    <property type="match status" value="1"/>
</dbReference>
<dbReference type="SUPFAM" id="SSF55874">
    <property type="entry name" value="ATPase domain of HSP90 chaperone/DNA topoisomerase II/histidine kinase"/>
    <property type="match status" value="1"/>
</dbReference>
<organism>
    <name type="scientific">Staphylococcus aureus (strain COL)</name>
    <dbReference type="NCBI Taxonomy" id="93062"/>
    <lineage>
        <taxon>Bacteria</taxon>
        <taxon>Bacillati</taxon>
        <taxon>Bacillota</taxon>
        <taxon>Bacilli</taxon>
        <taxon>Bacillales</taxon>
        <taxon>Staphylococcaceae</taxon>
        <taxon>Staphylococcus</taxon>
    </lineage>
</organism>
<evidence type="ECO:0000250" key="1">
    <source>
        <dbReference type="UniProtKB" id="Q99SZ7"/>
    </source>
</evidence>
<evidence type="ECO:0000250" key="2">
    <source>
        <dbReference type="UniProtKB" id="Q9HWA7"/>
    </source>
</evidence>
<evidence type="ECO:0000255" key="3"/>
<evidence type="ECO:0000305" key="4"/>
<proteinExistence type="inferred from homology"/>